<feature type="chain" id="PRO_0000352863" description="Scolopendra 5971.33 Da toxin">
    <location>
        <begin position="1"/>
        <end position="18" status="greater than"/>
    </location>
</feature>
<feature type="non-terminal residue">
    <location>
        <position position="18"/>
    </location>
</feature>
<accession>P0C8C7</accession>
<evidence type="ECO:0000269" key="1">
    <source>
    </source>
</evidence>
<evidence type="ECO:0000305" key="2"/>
<evidence type="ECO:0000305" key="3">
    <source>
    </source>
</evidence>
<reference key="1">
    <citation type="journal article" date="2007" name="Toxicon">
        <title>Venomic analyses of Scolopendra viridicornis nigra and Scolopendra angulata (Centipede, Scolopendromorpha): shedding light on venoms from a neglected group.</title>
        <authorList>
            <person name="Rates B."/>
            <person name="Bemquerer M.P."/>
            <person name="Richardson M."/>
            <person name="Borges M.H."/>
            <person name="Morales R.A.V."/>
            <person name="De Lima M.E."/>
            <person name="Pimenta A.M.C."/>
        </authorList>
    </citation>
    <scope>PROTEIN SEQUENCE</scope>
    <scope>MASS SPECTROMETRY</scope>
    <scope>SUBCELLULAR LOCATION</scope>
    <source>
        <tissue>Venom</tissue>
    </source>
</reference>
<comment type="subcellular location">
    <subcellularLocation>
        <location evidence="1">Secreted</location>
    </subcellularLocation>
</comment>
<comment type="tissue specificity">
    <text evidence="3">Expressed by the venom gland.</text>
</comment>
<comment type="mass spectrometry" mass="5971.33" method="Electrospray" evidence="1"/>
<comment type="similarity">
    <text evidence="2">Belongs to the scolopendra toxin 6 family.</text>
</comment>
<sequence length="18" mass="2061">EITVEPVRHPKKDPSEAE</sequence>
<dbReference type="GO" id="GO:0005576">
    <property type="term" value="C:extracellular region"/>
    <property type="evidence" value="ECO:0007669"/>
    <property type="project" value="UniProtKB-SubCell"/>
</dbReference>
<dbReference type="GO" id="GO:0090729">
    <property type="term" value="F:toxin activity"/>
    <property type="evidence" value="ECO:0007669"/>
    <property type="project" value="UniProtKB-KW"/>
</dbReference>
<name>STX6_SCOAN</name>
<keyword id="KW-0903">Direct protein sequencing</keyword>
<keyword id="KW-0528">Neurotoxin</keyword>
<keyword id="KW-0964">Secreted</keyword>
<keyword id="KW-0800">Toxin</keyword>
<proteinExistence type="evidence at protein level"/>
<organism>
    <name type="scientific">Scolopendra angulata</name>
    <name type="common">Barbados giant red centipede</name>
    <dbReference type="NCBI Taxonomy" id="486498"/>
    <lineage>
        <taxon>Eukaryota</taxon>
        <taxon>Metazoa</taxon>
        <taxon>Ecdysozoa</taxon>
        <taxon>Arthropoda</taxon>
        <taxon>Myriapoda</taxon>
        <taxon>Chilopoda</taxon>
        <taxon>Pleurostigmophora</taxon>
        <taxon>Scolopendromorpha</taxon>
        <taxon>Scolopendridae</taxon>
        <taxon>Scolopendra</taxon>
    </lineage>
</organism>
<protein>
    <recommendedName>
        <fullName>Scolopendra 5971.33 Da toxin</fullName>
    </recommendedName>
</protein>